<reference evidence="3" key="1">
    <citation type="journal article" date="2003" name="Peptides">
        <title>Purification and characterization of alpha- and beta-benincasins, arginine/glutamate-rich peptides with translation-inhibiting activity from wax gourd seeds.</title>
        <authorList>
            <person name="Ng T.B."/>
            <person name="Parkash A."/>
            <person name="Tso W.W."/>
        </authorList>
    </citation>
    <scope>PROTEIN SEQUENCE</scope>
    <scope>FUNCTION</scope>
    <source>
        <strain evidence="1">Dong-gua</strain>
        <tissue evidence="1">Seed</tissue>
    </source>
</reference>
<feature type="peptide" id="PRO_0000045092" description="Beta-benincasin">
    <location>
        <begin position="1"/>
        <end position="14" status="greater than"/>
    </location>
</feature>
<feature type="non-terminal residue" evidence="2">
    <location>
        <position position="14"/>
    </location>
</feature>
<protein>
    <recommendedName>
        <fullName>Beta-benincasin</fullName>
    </recommendedName>
</protein>
<accession>P83961</accession>
<comment type="function">
    <text evidence="1">Inhibits cell-free translation in rabbit reticulocyte lysate system.</text>
</comment>
<comment type="miscellaneous">
    <text>IC(50) of 320 pM in rabbit reticulocyte.</text>
</comment>
<keyword id="KW-0903">Direct protein sequencing</keyword>
<organism>
    <name type="scientific">Benincasa hispida</name>
    <name type="common">Wax gourd</name>
    <name type="synonym">Cucurbita hispida</name>
    <dbReference type="NCBI Taxonomy" id="102211"/>
    <lineage>
        <taxon>Eukaryota</taxon>
        <taxon>Viridiplantae</taxon>
        <taxon>Streptophyta</taxon>
        <taxon>Embryophyta</taxon>
        <taxon>Tracheophyta</taxon>
        <taxon>Spermatophyta</taxon>
        <taxon>Magnoliopsida</taxon>
        <taxon>eudicotyledons</taxon>
        <taxon>Gunneridae</taxon>
        <taxon>Pentapetalae</taxon>
        <taxon>rosids</taxon>
        <taxon>fabids</taxon>
        <taxon>Cucurbitales</taxon>
        <taxon>Cucurbitaceae</taxon>
        <taxon>Benincaseae</taxon>
        <taxon>Benincasa</taxon>
    </lineage>
</organism>
<dbReference type="GO" id="GO:0017148">
    <property type="term" value="P:negative regulation of translation"/>
    <property type="evidence" value="ECO:0000314"/>
    <property type="project" value="UniProtKB"/>
</dbReference>
<sequence length="14" mass="2056">RDWRREQERRQERR</sequence>
<evidence type="ECO:0000269" key="1">
    <source>
    </source>
</evidence>
<evidence type="ECO:0000303" key="2">
    <source>
    </source>
</evidence>
<evidence type="ECO:0000305" key="3"/>
<name>BNCB_BENHI</name>
<proteinExistence type="evidence at protein level"/>